<evidence type="ECO:0000255" key="1">
    <source>
        <dbReference type="HAMAP-Rule" id="MF_00203"/>
    </source>
</evidence>
<name>UVRC_BRUAB</name>
<dbReference type="EMBL" id="AE017223">
    <property type="protein sequence ID" value="AAX74093.1"/>
    <property type="molecule type" value="Genomic_DNA"/>
</dbReference>
<dbReference type="SMR" id="Q57E41"/>
<dbReference type="EnsemblBacteria" id="AAX74093">
    <property type="protein sequence ID" value="AAX74093"/>
    <property type="gene ID" value="BruAb1_0718"/>
</dbReference>
<dbReference type="KEGG" id="bmb:BruAb1_0718"/>
<dbReference type="HOGENOM" id="CLU_014841_3_0_5"/>
<dbReference type="Proteomes" id="UP000000540">
    <property type="component" value="Chromosome I"/>
</dbReference>
<dbReference type="GO" id="GO:0005737">
    <property type="term" value="C:cytoplasm"/>
    <property type="evidence" value="ECO:0007669"/>
    <property type="project" value="UniProtKB-SubCell"/>
</dbReference>
<dbReference type="GO" id="GO:0009380">
    <property type="term" value="C:excinuclease repair complex"/>
    <property type="evidence" value="ECO:0007669"/>
    <property type="project" value="InterPro"/>
</dbReference>
<dbReference type="GO" id="GO:0003677">
    <property type="term" value="F:DNA binding"/>
    <property type="evidence" value="ECO:0007669"/>
    <property type="project" value="UniProtKB-UniRule"/>
</dbReference>
<dbReference type="GO" id="GO:0009381">
    <property type="term" value="F:excinuclease ABC activity"/>
    <property type="evidence" value="ECO:0007669"/>
    <property type="project" value="UniProtKB-UniRule"/>
</dbReference>
<dbReference type="GO" id="GO:0006289">
    <property type="term" value="P:nucleotide-excision repair"/>
    <property type="evidence" value="ECO:0007669"/>
    <property type="project" value="UniProtKB-UniRule"/>
</dbReference>
<dbReference type="GO" id="GO:0009432">
    <property type="term" value="P:SOS response"/>
    <property type="evidence" value="ECO:0007669"/>
    <property type="project" value="UniProtKB-UniRule"/>
</dbReference>
<dbReference type="CDD" id="cd10434">
    <property type="entry name" value="GIY-YIG_UvrC_Cho"/>
    <property type="match status" value="1"/>
</dbReference>
<dbReference type="FunFam" id="3.30.420.340:FF:000001">
    <property type="entry name" value="UvrABC system protein C"/>
    <property type="match status" value="1"/>
</dbReference>
<dbReference type="FunFam" id="3.40.1440.10:FF:000001">
    <property type="entry name" value="UvrABC system protein C"/>
    <property type="match status" value="1"/>
</dbReference>
<dbReference type="Gene3D" id="1.10.150.20">
    <property type="entry name" value="5' to 3' exonuclease, C-terminal subdomain"/>
    <property type="match status" value="1"/>
</dbReference>
<dbReference type="Gene3D" id="3.40.1440.10">
    <property type="entry name" value="GIY-YIG endonuclease"/>
    <property type="match status" value="1"/>
</dbReference>
<dbReference type="Gene3D" id="4.10.860.10">
    <property type="entry name" value="UVR domain"/>
    <property type="match status" value="1"/>
</dbReference>
<dbReference type="Gene3D" id="3.30.420.340">
    <property type="entry name" value="UvrC, RNAse H endonuclease domain"/>
    <property type="match status" value="1"/>
</dbReference>
<dbReference type="HAMAP" id="MF_00203">
    <property type="entry name" value="UvrC"/>
    <property type="match status" value="1"/>
</dbReference>
<dbReference type="InterPro" id="IPR000305">
    <property type="entry name" value="GIY-YIG_endonuc"/>
</dbReference>
<dbReference type="InterPro" id="IPR035901">
    <property type="entry name" value="GIY-YIG_endonuc_sf"/>
</dbReference>
<dbReference type="InterPro" id="IPR047296">
    <property type="entry name" value="GIY-YIG_UvrC_Cho"/>
</dbReference>
<dbReference type="InterPro" id="IPR003583">
    <property type="entry name" value="Hlx-hairpin-Hlx_DNA-bd_motif"/>
</dbReference>
<dbReference type="InterPro" id="IPR010994">
    <property type="entry name" value="RuvA_2-like"/>
</dbReference>
<dbReference type="InterPro" id="IPR001943">
    <property type="entry name" value="UVR_dom"/>
</dbReference>
<dbReference type="InterPro" id="IPR036876">
    <property type="entry name" value="UVR_dom_sf"/>
</dbReference>
<dbReference type="InterPro" id="IPR050066">
    <property type="entry name" value="UvrABC_protein_C"/>
</dbReference>
<dbReference type="InterPro" id="IPR004791">
    <property type="entry name" value="UvrC"/>
</dbReference>
<dbReference type="InterPro" id="IPR001162">
    <property type="entry name" value="UvrC_RNase_H_dom"/>
</dbReference>
<dbReference type="InterPro" id="IPR038476">
    <property type="entry name" value="UvrC_RNase_H_dom_sf"/>
</dbReference>
<dbReference type="NCBIfam" id="NF001824">
    <property type="entry name" value="PRK00558.1-5"/>
    <property type="match status" value="1"/>
</dbReference>
<dbReference type="NCBIfam" id="TIGR00194">
    <property type="entry name" value="uvrC"/>
    <property type="match status" value="1"/>
</dbReference>
<dbReference type="PANTHER" id="PTHR30562:SF1">
    <property type="entry name" value="UVRABC SYSTEM PROTEIN C"/>
    <property type="match status" value="1"/>
</dbReference>
<dbReference type="PANTHER" id="PTHR30562">
    <property type="entry name" value="UVRC/OXIDOREDUCTASE"/>
    <property type="match status" value="1"/>
</dbReference>
<dbReference type="Pfam" id="PF01541">
    <property type="entry name" value="GIY-YIG"/>
    <property type="match status" value="1"/>
</dbReference>
<dbReference type="Pfam" id="PF14520">
    <property type="entry name" value="HHH_5"/>
    <property type="match status" value="1"/>
</dbReference>
<dbReference type="Pfam" id="PF02151">
    <property type="entry name" value="UVR"/>
    <property type="match status" value="1"/>
</dbReference>
<dbReference type="Pfam" id="PF22920">
    <property type="entry name" value="UvrC_RNaseH"/>
    <property type="match status" value="1"/>
</dbReference>
<dbReference type="Pfam" id="PF08459">
    <property type="entry name" value="UvrC_RNaseH_dom"/>
    <property type="match status" value="1"/>
</dbReference>
<dbReference type="SMART" id="SM00465">
    <property type="entry name" value="GIYc"/>
    <property type="match status" value="1"/>
</dbReference>
<dbReference type="SMART" id="SM00278">
    <property type="entry name" value="HhH1"/>
    <property type="match status" value="2"/>
</dbReference>
<dbReference type="SUPFAM" id="SSF46600">
    <property type="entry name" value="C-terminal UvrC-binding domain of UvrB"/>
    <property type="match status" value="1"/>
</dbReference>
<dbReference type="SUPFAM" id="SSF82771">
    <property type="entry name" value="GIY-YIG endonuclease"/>
    <property type="match status" value="1"/>
</dbReference>
<dbReference type="SUPFAM" id="SSF47781">
    <property type="entry name" value="RuvA domain 2-like"/>
    <property type="match status" value="1"/>
</dbReference>
<dbReference type="PROSITE" id="PS50164">
    <property type="entry name" value="GIY_YIG"/>
    <property type="match status" value="1"/>
</dbReference>
<dbReference type="PROSITE" id="PS50151">
    <property type="entry name" value="UVR"/>
    <property type="match status" value="1"/>
</dbReference>
<dbReference type="PROSITE" id="PS50165">
    <property type="entry name" value="UVRC"/>
    <property type="match status" value="1"/>
</dbReference>
<comment type="function">
    <text evidence="1">The UvrABC repair system catalyzes the recognition and processing of DNA lesions. UvrC both incises the 5' and 3' sides of the lesion. The N-terminal half is responsible for the 3' incision and the C-terminal half is responsible for the 5' incision.</text>
</comment>
<comment type="subunit">
    <text evidence="1">Interacts with UvrB in an incision complex.</text>
</comment>
<comment type="subcellular location">
    <subcellularLocation>
        <location evidence="1">Cytoplasm</location>
    </subcellularLocation>
</comment>
<comment type="similarity">
    <text evidence="1">Belongs to the UvrC family.</text>
</comment>
<organism>
    <name type="scientific">Brucella abortus biovar 1 (strain 9-941)</name>
    <dbReference type="NCBI Taxonomy" id="262698"/>
    <lineage>
        <taxon>Bacteria</taxon>
        <taxon>Pseudomonadati</taxon>
        <taxon>Pseudomonadota</taxon>
        <taxon>Alphaproteobacteria</taxon>
        <taxon>Hyphomicrobiales</taxon>
        <taxon>Brucellaceae</taxon>
        <taxon>Brucella/Ochrobactrum group</taxon>
        <taxon>Brucella</taxon>
    </lineage>
</organism>
<proteinExistence type="inferred from homology"/>
<sequence>MPDTAGLSGPDIINAFVKRLPNNPGVYRMFNSDGGVLYVGKARNLKKRVSNYARGIGHSNRITRMIRETVTMEFVVTRTETEALLLEANLIKRLRPRFNVLMRDDKSFPYILLTGGHRAPGIFKHRGARSRKGDYFGPFASAGAVGRTINALQRAFLLRTCTDSVFETRTRPCLLYQIKRCSAPCTYEISDEDYAGLVAEAKAFLSGKSQSVKDHLAAAMQAASADLDFEHAAVYRDRLAALSHVQSHQGINPQTVEEADVFAIHQEGGMTCIQVFFFRTGQNWGNRAYFPKADSSLGPAEVLGAFLSQFYDDKPCPKLVLLSETVEEQSLITEALSTRAGHKVQVSVPQRGEKKELVQHALTNAREALGRRLAETSSQARLLQGLAETFGLPRAPRRIEVYDNSHIMGTNAVGGMIVAGPEGFVKNQYRKFNIRSTDITPGDDFGMMREVIERRFSRLVKEHGTPAGEVKNPDAFPAWPDVILIDGGQGQVGAVRQILGEMGISDLVTAIGIAKGVDREAGRERFFMEGKQPFTLPPRDPVLYFIQRLRDEAHRFAIGTHRARRKKEIVRNPLDEIAGIGPTRKRALLHHFGTAKAVSRAAVEDLMQIDGISEAMARAIHDHFRDK</sequence>
<protein>
    <recommendedName>
        <fullName evidence="1">UvrABC system protein C</fullName>
        <shortName evidence="1">Protein UvrC</shortName>
    </recommendedName>
    <alternativeName>
        <fullName evidence="1">Excinuclease ABC subunit C</fullName>
    </alternativeName>
</protein>
<accession>Q57E41</accession>
<reference key="1">
    <citation type="journal article" date="2005" name="J. Bacteriol.">
        <title>Completion of the genome sequence of Brucella abortus and comparison to the highly similar genomes of Brucella melitensis and Brucella suis.</title>
        <authorList>
            <person name="Halling S.M."/>
            <person name="Peterson-Burch B.D."/>
            <person name="Bricker B.J."/>
            <person name="Zuerner R.L."/>
            <person name="Qing Z."/>
            <person name="Li L.-L."/>
            <person name="Kapur V."/>
            <person name="Alt D.P."/>
            <person name="Olsen S.C."/>
        </authorList>
    </citation>
    <scope>NUCLEOTIDE SEQUENCE [LARGE SCALE GENOMIC DNA]</scope>
    <source>
        <strain>9-941</strain>
    </source>
</reference>
<keyword id="KW-0963">Cytoplasm</keyword>
<keyword id="KW-0227">DNA damage</keyword>
<keyword id="KW-0228">DNA excision</keyword>
<keyword id="KW-0234">DNA repair</keyword>
<keyword id="KW-0267">Excision nuclease</keyword>
<keyword id="KW-0742">SOS response</keyword>
<feature type="chain" id="PRO_0000227405" description="UvrABC system protein C">
    <location>
        <begin position="1"/>
        <end position="627"/>
    </location>
</feature>
<feature type="domain" description="GIY-YIG" evidence="1">
    <location>
        <begin position="22"/>
        <end position="100"/>
    </location>
</feature>
<feature type="domain" description="UVR" evidence="1">
    <location>
        <begin position="210"/>
        <end position="245"/>
    </location>
</feature>
<gene>
    <name evidence="1" type="primary">uvrC</name>
    <name type="ordered locus">BruAb1_0718</name>
</gene>